<evidence type="ECO:0000255" key="1">
    <source>
        <dbReference type="HAMAP-Rule" id="MF_00337"/>
    </source>
</evidence>
<reference key="1">
    <citation type="journal article" date="2006" name="Proc. Natl. Acad. Sci. U.S.A.">
        <title>Molecular genetic anatomy of inter- and intraserotype variation in the human bacterial pathogen group A Streptococcus.</title>
        <authorList>
            <person name="Beres S.B."/>
            <person name="Richter E.W."/>
            <person name="Nagiec M.J."/>
            <person name="Sumby P."/>
            <person name="Porcella S.F."/>
            <person name="DeLeo F.R."/>
            <person name="Musser J.M."/>
        </authorList>
    </citation>
    <scope>NUCLEOTIDE SEQUENCE [LARGE SCALE GENOMIC DNA]</scope>
    <source>
        <strain>MGAS10750</strain>
    </source>
</reference>
<dbReference type="EC" id="3.1.11.6" evidence="1"/>
<dbReference type="EMBL" id="CP000262">
    <property type="protein sequence ID" value="ABF38289.1"/>
    <property type="molecule type" value="Genomic_DNA"/>
</dbReference>
<dbReference type="SMR" id="Q1J5U7"/>
<dbReference type="KEGG" id="spi:MGAS10750_Spy1339"/>
<dbReference type="HOGENOM" id="CLU_145918_3_2_9"/>
<dbReference type="Proteomes" id="UP000002434">
    <property type="component" value="Chromosome"/>
</dbReference>
<dbReference type="GO" id="GO:0005829">
    <property type="term" value="C:cytosol"/>
    <property type="evidence" value="ECO:0007669"/>
    <property type="project" value="TreeGrafter"/>
</dbReference>
<dbReference type="GO" id="GO:0009318">
    <property type="term" value="C:exodeoxyribonuclease VII complex"/>
    <property type="evidence" value="ECO:0007669"/>
    <property type="project" value="InterPro"/>
</dbReference>
<dbReference type="GO" id="GO:0008855">
    <property type="term" value="F:exodeoxyribonuclease VII activity"/>
    <property type="evidence" value="ECO:0007669"/>
    <property type="project" value="UniProtKB-UniRule"/>
</dbReference>
<dbReference type="GO" id="GO:0006308">
    <property type="term" value="P:DNA catabolic process"/>
    <property type="evidence" value="ECO:0007669"/>
    <property type="project" value="UniProtKB-UniRule"/>
</dbReference>
<dbReference type="Gene3D" id="1.10.287.1040">
    <property type="entry name" value="Exonuclease VII, small subunit"/>
    <property type="match status" value="1"/>
</dbReference>
<dbReference type="HAMAP" id="MF_00337">
    <property type="entry name" value="Exonuc_7_S"/>
    <property type="match status" value="1"/>
</dbReference>
<dbReference type="InterPro" id="IPR003761">
    <property type="entry name" value="Exonuc_VII_S"/>
</dbReference>
<dbReference type="InterPro" id="IPR037004">
    <property type="entry name" value="Exonuc_VII_ssu_sf"/>
</dbReference>
<dbReference type="NCBIfam" id="NF002138">
    <property type="entry name" value="PRK00977.1-2"/>
    <property type="match status" value="1"/>
</dbReference>
<dbReference type="NCBIfam" id="TIGR01280">
    <property type="entry name" value="xseB"/>
    <property type="match status" value="1"/>
</dbReference>
<dbReference type="PANTHER" id="PTHR34137">
    <property type="entry name" value="EXODEOXYRIBONUCLEASE 7 SMALL SUBUNIT"/>
    <property type="match status" value="1"/>
</dbReference>
<dbReference type="PANTHER" id="PTHR34137:SF1">
    <property type="entry name" value="EXODEOXYRIBONUCLEASE 7 SMALL SUBUNIT"/>
    <property type="match status" value="1"/>
</dbReference>
<dbReference type="Pfam" id="PF02609">
    <property type="entry name" value="Exonuc_VII_S"/>
    <property type="match status" value="1"/>
</dbReference>
<dbReference type="PIRSF" id="PIRSF006488">
    <property type="entry name" value="Exonuc_VII_S"/>
    <property type="match status" value="1"/>
</dbReference>
<dbReference type="SUPFAM" id="SSF116842">
    <property type="entry name" value="XseB-like"/>
    <property type="match status" value="1"/>
</dbReference>
<feature type="chain" id="PRO_0000303760" description="Exodeoxyribonuclease 7 small subunit">
    <location>
        <begin position="1"/>
        <end position="71"/>
    </location>
</feature>
<protein>
    <recommendedName>
        <fullName evidence="1">Exodeoxyribonuclease 7 small subunit</fullName>
        <ecNumber evidence="1">3.1.11.6</ecNumber>
    </recommendedName>
    <alternativeName>
        <fullName evidence="1">Exodeoxyribonuclease VII small subunit</fullName>
        <shortName evidence="1">Exonuclease VII small subunit</shortName>
    </alternativeName>
</protein>
<accession>Q1J5U7</accession>
<name>EX7S_STRPF</name>
<gene>
    <name evidence="1" type="primary">xseB</name>
    <name type="ordered locus">MGAS10750_Spy1339</name>
</gene>
<organism>
    <name type="scientific">Streptococcus pyogenes serotype M4 (strain MGAS10750)</name>
    <dbReference type="NCBI Taxonomy" id="370554"/>
    <lineage>
        <taxon>Bacteria</taxon>
        <taxon>Bacillati</taxon>
        <taxon>Bacillota</taxon>
        <taxon>Bacilli</taxon>
        <taxon>Lactobacillales</taxon>
        <taxon>Streptococcaceae</taxon>
        <taxon>Streptococcus</taxon>
    </lineage>
</organism>
<sequence>MSKTKTFEENLQDLETIVNKLENGDVPLEEAISEFQKGMLLSKELQKTLQAAEKTLVKVMQADGTEVDMDD</sequence>
<proteinExistence type="inferred from homology"/>
<comment type="function">
    <text evidence="1">Bidirectionally degrades single-stranded DNA into large acid-insoluble oligonucleotides, which are then degraded further into small acid-soluble oligonucleotides.</text>
</comment>
<comment type="catalytic activity">
    <reaction evidence="1">
        <text>Exonucleolytic cleavage in either 5'- to 3'- or 3'- to 5'-direction to yield nucleoside 5'-phosphates.</text>
        <dbReference type="EC" id="3.1.11.6"/>
    </reaction>
</comment>
<comment type="subunit">
    <text evidence="1">Heterooligomer composed of large and small subunits.</text>
</comment>
<comment type="subcellular location">
    <subcellularLocation>
        <location evidence="1">Cytoplasm</location>
    </subcellularLocation>
</comment>
<comment type="similarity">
    <text evidence="1">Belongs to the XseB family.</text>
</comment>
<keyword id="KW-0963">Cytoplasm</keyword>
<keyword id="KW-0269">Exonuclease</keyword>
<keyword id="KW-0378">Hydrolase</keyword>
<keyword id="KW-0540">Nuclease</keyword>